<organism>
    <name type="scientific">Actinobacillus pleuropneumoniae serotype 3 (strain JL03)</name>
    <dbReference type="NCBI Taxonomy" id="434271"/>
    <lineage>
        <taxon>Bacteria</taxon>
        <taxon>Pseudomonadati</taxon>
        <taxon>Pseudomonadota</taxon>
        <taxon>Gammaproteobacteria</taxon>
        <taxon>Pasteurellales</taxon>
        <taxon>Pasteurellaceae</taxon>
        <taxon>Actinobacillus</taxon>
    </lineage>
</organism>
<sequence length="153" mass="15980">MAKITGNLVATGLKFGIVTARFNDFINDKLLSGAIDTLVRHGADENNIDTAWVPGAFEIPLVAKKMATSGKYDAVICLGTVIRGSTTHYDYVCNEAAKGIGAVALETGVPVIFGVLTTENIEQAIERAGTKAGNKGSECALGAIEIVNVLKAI</sequence>
<keyword id="KW-0686">Riboflavin biosynthesis</keyword>
<keyword id="KW-0808">Transferase</keyword>
<proteinExistence type="inferred from homology"/>
<feature type="chain" id="PRO_1000098159" description="6,7-dimethyl-8-ribityllumazine synthase">
    <location>
        <begin position="1"/>
        <end position="153"/>
    </location>
</feature>
<feature type="active site" description="Proton donor" evidence="1">
    <location>
        <position position="88"/>
    </location>
</feature>
<feature type="binding site" evidence="1">
    <location>
        <position position="22"/>
    </location>
    <ligand>
        <name>5-amino-6-(D-ribitylamino)uracil</name>
        <dbReference type="ChEBI" id="CHEBI:15934"/>
    </ligand>
</feature>
<feature type="binding site" evidence="1">
    <location>
        <begin position="56"/>
        <end position="58"/>
    </location>
    <ligand>
        <name>5-amino-6-(D-ribitylamino)uracil</name>
        <dbReference type="ChEBI" id="CHEBI:15934"/>
    </ligand>
</feature>
<feature type="binding site" evidence="1">
    <location>
        <begin position="80"/>
        <end position="82"/>
    </location>
    <ligand>
        <name>5-amino-6-(D-ribitylamino)uracil</name>
        <dbReference type="ChEBI" id="CHEBI:15934"/>
    </ligand>
</feature>
<feature type="binding site" evidence="1">
    <location>
        <begin position="85"/>
        <end position="86"/>
    </location>
    <ligand>
        <name>(2S)-2-hydroxy-3-oxobutyl phosphate</name>
        <dbReference type="ChEBI" id="CHEBI:58830"/>
    </ligand>
</feature>
<feature type="binding site" evidence="1">
    <location>
        <position position="113"/>
    </location>
    <ligand>
        <name>5-amino-6-(D-ribitylamino)uracil</name>
        <dbReference type="ChEBI" id="CHEBI:15934"/>
    </ligand>
</feature>
<feature type="binding site" evidence="1">
    <location>
        <position position="127"/>
    </location>
    <ligand>
        <name>(2S)-2-hydroxy-3-oxobutyl phosphate</name>
        <dbReference type="ChEBI" id="CHEBI:58830"/>
    </ligand>
</feature>
<reference key="1">
    <citation type="journal article" date="2008" name="PLoS ONE">
        <title>Genome biology of Actinobacillus pleuropneumoniae JL03, an isolate of serotype 3 prevalent in China.</title>
        <authorList>
            <person name="Xu Z."/>
            <person name="Zhou Y."/>
            <person name="Li L."/>
            <person name="Zhou R."/>
            <person name="Xiao S."/>
            <person name="Wan Y."/>
            <person name="Zhang S."/>
            <person name="Wang K."/>
            <person name="Li W."/>
            <person name="Li L."/>
            <person name="Jin H."/>
            <person name="Kang M."/>
            <person name="Dalai B."/>
            <person name="Li T."/>
            <person name="Liu L."/>
            <person name="Cheng Y."/>
            <person name="Zhang L."/>
            <person name="Xu T."/>
            <person name="Zheng H."/>
            <person name="Pu S."/>
            <person name="Wang B."/>
            <person name="Gu W."/>
            <person name="Zhang X.L."/>
            <person name="Zhu G.-F."/>
            <person name="Wang S."/>
            <person name="Zhao G.-P."/>
            <person name="Chen H."/>
        </authorList>
    </citation>
    <scope>NUCLEOTIDE SEQUENCE [LARGE SCALE GENOMIC DNA]</scope>
    <source>
        <strain>JL03</strain>
    </source>
</reference>
<protein>
    <recommendedName>
        <fullName evidence="1">6,7-dimethyl-8-ribityllumazine synthase</fullName>
        <shortName evidence="1">DMRL synthase</shortName>
        <shortName evidence="1">LS</shortName>
        <shortName evidence="1">Lumazine synthase</shortName>
        <ecNumber evidence="1">2.5.1.78</ecNumber>
    </recommendedName>
</protein>
<accession>B0BTN9</accession>
<gene>
    <name evidence="1" type="primary">ribH</name>
    <name type="ordered locus">APJL_0405</name>
</gene>
<evidence type="ECO:0000255" key="1">
    <source>
        <dbReference type="HAMAP-Rule" id="MF_00178"/>
    </source>
</evidence>
<name>RISB_ACTPJ</name>
<comment type="function">
    <text evidence="1">Catalyzes the formation of 6,7-dimethyl-8-ribityllumazine by condensation of 5-amino-6-(D-ribitylamino)uracil with 3,4-dihydroxy-2-butanone 4-phosphate. This is the penultimate step in the biosynthesis of riboflavin.</text>
</comment>
<comment type="catalytic activity">
    <reaction evidence="1">
        <text>(2S)-2-hydroxy-3-oxobutyl phosphate + 5-amino-6-(D-ribitylamino)uracil = 6,7-dimethyl-8-(1-D-ribityl)lumazine + phosphate + 2 H2O + H(+)</text>
        <dbReference type="Rhea" id="RHEA:26152"/>
        <dbReference type="ChEBI" id="CHEBI:15377"/>
        <dbReference type="ChEBI" id="CHEBI:15378"/>
        <dbReference type="ChEBI" id="CHEBI:15934"/>
        <dbReference type="ChEBI" id="CHEBI:43474"/>
        <dbReference type="ChEBI" id="CHEBI:58201"/>
        <dbReference type="ChEBI" id="CHEBI:58830"/>
        <dbReference type="EC" id="2.5.1.78"/>
    </reaction>
</comment>
<comment type="pathway">
    <text evidence="1">Cofactor biosynthesis; riboflavin biosynthesis; riboflavin from 2-hydroxy-3-oxobutyl phosphate and 5-amino-6-(D-ribitylamino)uracil: step 1/2.</text>
</comment>
<comment type="subunit">
    <text evidence="1">Forms an icosahedral capsid composed of 60 subunits, arranged as a dodecamer of pentamers.</text>
</comment>
<comment type="similarity">
    <text evidence="1">Belongs to the DMRL synthase family.</text>
</comment>
<dbReference type="EC" id="2.5.1.78" evidence="1"/>
<dbReference type="EMBL" id="CP000687">
    <property type="protein sequence ID" value="ABY68994.1"/>
    <property type="molecule type" value="Genomic_DNA"/>
</dbReference>
<dbReference type="RefSeq" id="WP_005611553.1">
    <property type="nucleotide sequence ID" value="NC_010278.1"/>
</dbReference>
<dbReference type="SMR" id="B0BTN9"/>
<dbReference type="KEGG" id="apj:APJL_0405"/>
<dbReference type="HOGENOM" id="CLU_089358_1_1_6"/>
<dbReference type="UniPathway" id="UPA00275">
    <property type="reaction ID" value="UER00404"/>
</dbReference>
<dbReference type="Proteomes" id="UP000008547">
    <property type="component" value="Chromosome"/>
</dbReference>
<dbReference type="GO" id="GO:0005829">
    <property type="term" value="C:cytosol"/>
    <property type="evidence" value="ECO:0007669"/>
    <property type="project" value="TreeGrafter"/>
</dbReference>
<dbReference type="GO" id="GO:0009349">
    <property type="term" value="C:riboflavin synthase complex"/>
    <property type="evidence" value="ECO:0007669"/>
    <property type="project" value="InterPro"/>
</dbReference>
<dbReference type="GO" id="GO:0000906">
    <property type="term" value="F:6,7-dimethyl-8-ribityllumazine synthase activity"/>
    <property type="evidence" value="ECO:0007669"/>
    <property type="project" value="UniProtKB-UniRule"/>
</dbReference>
<dbReference type="GO" id="GO:0009231">
    <property type="term" value="P:riboflavin biosynthetic process"/>
    <property type="evidence" value="ECO:0007669"/>
    <property type="project" value="UniProtKB-UniRule"/>
</dbReference>
<dbReference type="CDD" id="cd09209">
    <property type="entry name" value="Lumazine_synthase-I"/>
    <property type="match status" value="1"/>
</dbReference>
<dbReference type="FunFam" id="3.40.50.960:FF:000001">
    <property type="entry name" value="6,7-dimethyl-8-ribityllumazine synthase"/>
    <property type="match status" value="1"/>
</dbReference>
<dbReference type="Gene3D" id="3.40.50.960">
    <property type="entry name" value="Lumazine/riboflavin synthase"/>
    <property type="match status" value="1"/>
</dbReference>
<dbReference type="HAMAP" id="MF_00178">
    <property type="entry name" value="Lumazine_synth"/>
    <property type="match status" value="1"/>
</dbReference>
<dbReference type="InterPro" id="IPR034964">
    <property type="entry name" value="LS"/>
</dbReference>
<dbReference type="InterPro" id="IPR002180">
    <property type="entry name" value="LS/RS"/>
</dbReference>
<dbReference type="InterPro" id="IPR036467">
    <property type="entry name" value="LS/RS_sf"/>
</dbReference>
<dbReference type="NCBIfam" id="TIGR00114">
    <property type="entry name" value="lumazine-synth"/>
    <property type="match status" value="1"/>
</dbReference>
<dbReference type="NCBIfam" id="NF000812">
    <property type="entry name" value="PRK00061.1-4"/>
    <property type="match status" value="1"/>
</dbReference>
<dbReference type="PANTHER" id="PTHR21058:SF0">
    <property type="entry name" value="6,7-DIMETHYL-8-RIBITYLLUMAZINE SYNTHASE"/>
    <property type="match status" value="1"/>
</dbReference>
<dbReference type="PANTHER" id="PTHR21058">
    <property type="entry name" value="6,7-DIMETHYL-8-RIBITYLLUMAZINE SYNTHASE DMRL SYNTHASE LUMAZINE SYNTHASE"/>
    <property type="match status" value="1"/>
</dbReference>
<dbReference type="Pfam" id="PF00885">
    <property type="entry name" value="DMRL_synthase"/>
    <property type="match status" value="1"/>
</dbReference>
<dbReference type="SUPFAM" id="SSF52121">
    <property type="entry name" value="Lumazine synthase"/>
    <property type="match status" value="1"/>
</dbReference>